<organism>
    <name type="scientific">Geobacillus thermodenitrificans (strain NG80-2)</name>
    <dbReference type="NCBI Taxonomy" id="420246"/>
    <lineage>
        <taxon>Bacteria</taxon>
        <taxon>Bacillati</taxon>
        <taxon>Bacillota</taxon>
        <taxon>Bacilli</taxon>
        <taxon>Bacillales</taxon>
        <taxon>Anoxybacillaceae</taxon>
        <taxon>Geobacillus</taxon>
    </lineage>
</organism>
<accession>A4IM41</accession>
<proteinExistence type="evidence at protein level"/>
<keyword id="KW-0002">3D-structure</keyword>
<feature type="chain" id="PRO_0000294255" description="Putative regulatory protein GTNG_1019">
    <location>
        <begin position="1"/>
        <end position="87"/>
    </location>
</feature>
<feature type="strand" evidence="3">
    <location>
        <begin position="4"/>
        <end position="7"/>
    </location>
</feature>
<feature type="strand" evidence="3">
    <location>
        <begin position="13"/>
        <end position="15"/>
    </location>
</feature>
<feature type="helix" evidence="3">
    <location>
        <begin position="16"/>
        <end position="18"/>
    </location>
</feature>
<feature type="strand" evidence="3">
    <location>
        <begin position="19"/>
        <end position="23"/>
    </location>
</feature>
<feature type="helix" evidence="3">
    <location>
        <begin position="28"/>
        <end position="39"/>
    </location>
</feature>
<feature type="strand" evidence="3">
    <location>
        <begin position="43"/>
        <end position="45"/>
    </location>
</feature>
<feature type="strand" evidence="3">
    <location>
        <begin position="54"/>
        <end position="58"/>
    </location>
</feature>
<feature type="strand" evidence="3">
    <location>
        <begin position="63"/>
        <end position="68"/>
    </location>
</feature>
<feature type="helix" evidence="3">
    <location>
        <begin position="70"/>
        <end position="75"/>
    </location>
</feature>
<feature type="helix" evidence="2">
    <location>
        <begin position="76"/>
        <end position="78"/>
    </location>
</feature>
<name>Y1019_GEOTN</name>
<reference key="1">
    <citation type="journal article" date="2007" name="Proc. Natl. Acad. Sci. U.S.A.">
        <title>Genome and proteome of long-chain alkane degrading Geobacillus thermodenitrificans NG80-2 isolated from a deep-subsurface oil reservoir.</title>
        <authorList>
            <person name="Feng L."/>
            <person name="Wang W."/>
            <person name="Cheng J."/>
            <person name="Ren Y."/>
            <person name="Zhao G."/>
            <person name="Gao C."/>
            <person name="Tang Y."/>
            <person name="Liu X."/>
            <person name="Han W."/>
            <person name="Peng X."/>
            <person name="Liu R."/>
            <person name="Wang L."/>
        </authorList>
    </citation>
    <scope>NUCLEOTIDE SEQUENCE [LARGE SCALE GENOMIC DNA]</scope>
    <source>
        <strain>NG80-2</strain>
    </source>
</reference>
<dbReference type="EMBL" id="CP000557">
    <property type="protein sequence ID" value="ABO66395.1"/>
    <property type="molecule type" value="Genomic_DNA"/>
</dbReference>
<dbReference type="RefSeq" id="WP_008878645.1">
    <property type="nucleotide sequence ID" value="NC_009328.1"/>
</dbReference>
<dbReference type="PDB" id="7BM2">
    <property type="method" value="X-ray"/>
    <property type="resolution" value="2.29 A"/>
    <property type="chains" value="A/B/C/D=1-87"/>
</dbReference>
<dbReference type="PDB" id="7BME">
    <property type="method" value="X-ray"/>
    <property type="resolution" value="2.60 A"/>
    <property type="chains" value="A/B/C/D/E/F/G=2-87"/>
</dbReference>
<dbReference type="PDB" id="7P1W">
    <property type="method" value="X-ray"/>
    <property type="resolution" value="1.80 A"/>
    <property type="chains" value="A/B=2-87"/>
</dbReference>
<dbReference type="PDBsum" id="7BM2"/>
<dbReference type="PDBsum" id="7BME"/>
<dbReference type="PDBsum" id="7P1W"/>
<dbReference type="SMR" id="A4IM41"/>
<dbReference type="GeneID" id="87621388"/>
<dbReference type="KEGG" id="gtn:GTNG_1019"/>
<dbReference type="eggNOG" id="COG2052">
    <property type="taxonomic scope" value="Bacteria"/>
</dbReference>
<dbReference type="HOGENOM" id="CLU_165326_0_0_9"/>
<dbReference type="Proteomes" id="UP000001578">
    <property type="component" value="Chromosome"/>
</dbReference>
<dbReference type="HAMAP" id="MF_01503">
    <property type="entry name" value="RemA"/>
    <property type="match status" value="1"/>
</dbReference>
<dbReference type="InterPro" id="IPR007169">
    <property type="entry name" value="RemA-like"/>
</dbReference>
<dbReference type="NCBIfam" id="NF046064">
    <property type="entry name" value="MtxBflmRegRemA"/>
    <property type="match status" value="1"/>
</dbReference>
<dbReference type="NCBIfam" id="NF003315">
    <property type="entry name" value="PRK04323.1"/>
    <property type="match status" value="1"/>
</dbReference>
<dbReference type="PANTHER" id="PTHR38449:SF1">
    <property type="entry name" value="REGULATORY PROTEIN SSL2874-RELATED"/>
    <property type="match status" value="1"/>
</dbReference>
<dbReference type="PANTHER" id="PTHR38449">
    <property type="entry name" value="REGULATORY PROTEIN TM_1690-RELATED"/>
    <property type="match status" value="1"/>
</dbReference>
<dbReference type="Pfam" id="PF04025">
    <property type="entry name" value="RemA-like"/>
    <property type="match status" value="1"/>
</dbReference>
<gene>
    <name type="ordered locus">GTNG_1019</name>
</gene>
<sequence>MMMKFINIGYGNMVSAARIITIVSPDSAPIKRIIQDAREKGKLVDATHGRRTRAVIITDSDHVILSSVQPETVANRLYGSDDFSEEG</sequence>
<comment type="similarity">
    <text evidence="1">Belongs to the RemA family.</text>
</comment>
<protein>
    <recommendedName>
        <fullName evidence="1">Putative regulatory protein GTNG_1019</fullName>
    </recommendedName>
</protein>
<evidence type="ECO:0000255" key="1">
    <source>
        <dbReference type="HAMAP-Rule" id="MF_01503"/>
    </source>
</evidence>
<evidence type="ECO:0007829" key="2">
    <source>
        <dbReference type="PDB" id="7BM2"/>
    </source>
</evidence>
<evidence type="ECO:0007829" key="3">
    <source>
        <dbReference type="PDB" id="7P1W"/>
    </source>
</evidence>